<sequence>MIKWPWKVQESAHQTALPWQEALSIPLLTGLTEQEQSKLVTLAERFLQQKRLVPLQGFELDSLRSCRIALLFCLPVLELGLEWLDGFHEVLIYPAPFVVDDEWEDDIGLVHNQRIVQSGQSWQQGPIVLNWLDIQDSFDASGFNLIIHEVAHKLDTRNGDRASGVPFIPLREVAGWEHDLHAAMNNIQEEIELVGENAASIDAYAASDPAECFAVLSEYFFSAPELFAPRFPSLWQRFCQFYQQDPLQRLHRANDTDSFSATNVH</sequence>
<protein>
    <recommendedName>
        <fullName evidence="1">Mlc titration factor A</fullName>
    </recommendedName>
    <alternativeName>
        <fullName evidence="1">Probable zinc metallopeptidase MtfA</fullName>
        <ecNumber evidence="1">3.4.11.-</ecNumber>
    </alternativeName>
</protein>
<comment type="function">
    <text evidence="1">Involved in the modulation of the activity of the glucose-phosphotransferase system (glucose-PTS). Interacts with the transcriptional repressor Mlc, preventing its interaction with DNA and leading to the modulation of expression of genes regulated by Mlc, including ptsG, which encodes the PTS system glucose-specific EIICB component.</text>
</comment>
<comment type="function">
    <text evidence="1">Shows zinc-dependent metallopeptidase activity.</text>
</comment>
<comment type="cofactor">
    <cofactor evidence="1">
        <name>Zn(2+)</name>
        <dbReference type="ChEBI" id="CHEBI:29105"/>
    </cofactor>
    <text evidence="1">Binds 1 zinc ion per subunit.</text>
</comment>
<comment type="subunit">
    <text evidence="1">Interacts with Mlc.</text>
</comment>
<comment type="subcellular location">
    <subcellularLocation>
        <location evidence="1">Cytoplasm</location>
    </subcellularLocation>
</comment>
<comment type="similarity">
    <text evidence="1">Belongs to the MtfA family.</text>
</comment>
<dbReference type="EC" id="3.4.11.-" evidence="1"/>
<dbReference type="EMBL" id="CP000946">
    <property type="protein sequence ID" value="ACA77322.1"/>
    <property type="molecule type" value="Genomic_DNA"/>
</dbReference>
<dbReference type="RefSeq" id="WP_004016369.1">
    <property type="nucleotide sequence ID" value="NZ_MTFT01000011.1"/>
</dbReference>
<dbReference type="SMR" id="B1IZT7"/>
<dbReference type="MEROPS" id="M90.001"/>
<dbReference type="KEGG" id="ecl:EcolC_1670"/>
<dbReference type="HOGENOM" id="CLU_063037_2_0_6"/>
<dbReference type="GO" id="GO:0005829">
    <property type="term" value="C:cytosol"/>
    <property type="evidence" value="ECO:0007669"/>
    <property type="project" value="TreeGrafter"/>
</dbReference>
<dbReference type="GO" id="GO:0004177">
    <property type="term" value="F:aminopeptidase activity"/>
    <property type="evidence" value="ECO:0007669"/>
    <property type="project" value="UniProtKB-UniRule"/>
</dbReference>
<dbReference type="GO" id="GO:0008237">
    <property type="term" value="F:metallopeptidase activity"/>
    <property type="evidence" value="ECO:0007669"/>
    <property type="project" value="UniProtKB-UniRule"/>
</dbReference>
<dbReference type="GO" id="GO:0008270">
    <property type="term" value="F:zinc ion binding"/>
    <property type="evidence" value="ECO:0007669"/>
    <property type="project" value="UniProtKB-UniRule"/>
</dbReference>
<dbReference type="GO" id="GO:0006508">
    <property type="term" value="P:proteolysis"/>
    <property type="evidence" value="ECO:0007669"/>
    <property type="project" value="UniProtKB-KW"/>
</dbReference>
<dbReference type="CDD" id="cd20169">
    <property type="entry name" value="Peptidase_M90_mtfA"/>
    <property type="match status" value="1"/>
</dbReference>
<dbReference type="FunFam" id="1.10.472.150:FF:000001">
    <property type="entry name" value="Protein MtfA"/>
    <property type="match status" value="1"/>
</dbReference>
<dbReference type="FunFam" id="3.40.390.10:FF:000012">
    <property type="entry name" value="Protein MtfA"/>
    <property type="match status" value="1"/>
</dbReference>
<dbReference type="Gene3D" id="3.40.390.10">
    <property type="entry name" value="Collagenase (Catalytic Domain)"/>
    <property type="match status" value="1"/>
</dbReference>
<dbReference type="Gene3D" id="1.10.472.150">
    <property type="entry name" value="Glucose-regulated metallo-peptidase M90, N-terminal domain"/>
    <property type="match status" value="1"/>
</dbReference>
<dbReference type="HAMAP" id="MF_01593">
    <property type="entry name" value="MtfA"/>
    <property type="match status" value="1"/>
</dbReference>
<dbReference type="InterPro" id="IPR024079">
    <property type="entry name" value="MetalloPept_cat_dom_sf"/>
</dbReference>
<dbReference type="InterPro" id="IPR057256">
    <property type="entry name" value="MtfA_enterob"/>
</dbReference>
<dbReference type="InterPro" id="IPR010384">
    <property type="entry name" value="MtfA_fam"/>
</dbReference>
<dbReference type="InterPro" id="IPR042252">
    <property type="entry name" value="MtfA_N"/>
</dbReference>
<dbReference type="NCBIfam" id="NF011939">
    <property type="entry name" value="PRK15410.1"/>
    <property type="match status" value="1"/>
</dbReference>
<dbReference type="PANTHER" id="PTHR30164">
    <property type="entry name" value="MTFA PEPTIDASE"/>
    <property type="match status" value="1"/>
</dbReference>
<dbReference type="PANTHER" id="PTHR30164:SF2">
    <property type="entry name" value="PROTEIN MTFA"/>
    <property type="match status" value="1"/>
</dbReference>
<dbReference type="Pfam" id="PF06167">
    <property type="entry name" value="Peptidase_M90"/>
    <property type="match status" value="1"/>
</dbReference>
<dbReference type="SUPFAM" id="SSF55486">
    <property type="entry name" value="Metalloproteases ('zincins'), catalytic domain"/>
    <property type="match status" value="1"/>
</dbReference>
<feature type="chain" id="PRO_1000087979" description="Mlc titration factor A">
    <location>
        <begin position="1"/>
        <end position="265"/>
    </location>
</feature>
<feature type="binding site" evidence="1">
    <location>
        <position position="111"/>
    </location>
    <ligand>
        <name>Zn(2+)</name>
        <dbReference type="ChEBI" id="CHEBI:29105"/>
    </ligand>
</feature>
<feature type="binding site" evidence="1">
    <location>
        <position position="148"/>
    </location>
    <ligand>
        <name>Zn(2+)</name>
        <dbReference type="ChEBI" id="CHEBI:29105"/>
    </ligand>
</feature>
<feature type="binding site" evidence="1">
    <location>
        <position position="152"/>
    </location>
    <ligand>
        <name>Zn(2+)</name>
        <dbReference type="ChEBI" id="CHEBI:29105"/>
    </ligand>
</feature>
<feature type="binding site" evidence="1">
    <location>
        <position position="211"/>
    </location>
    <ligand>
        <name>Zn(2+)</name>
        <dbReference type="ChEBI" id="CHEBI:29105"/>
    </ligand>
</feature>
<name>MTFA_ECOLC</name>
<reference key="1">
    <citation type="submission" date="2008-02" db="EMBL/GenBank/DDBJ databases">
        <title>Complete sequence of Escherichia coli C str. ATCC 8739.</title>
        <authorList>
            <person name="Copeland A."/>
            <person name="Lucas S."/>
            <person name="Lapidus A."/>
            <person name="Glavina del Rio T."/>
            <person name="Dalin E."/>
            <person name="Tice H."/>
            <person name="Bruce D."/>
            <person name="Goodwin L."/>
            <person name="Pitluck S."/>
            <person name="Kiss H."/>
            <person name="Brettin T."/>
            <person name="Detter J.C."/>
            <person name="Han C."/>
            <person name="Kuske C.R."/>
            <person name="Schmutz J."/>
            <person name="Larimer F."/>
            <person name="Land M."/>
            <person name="Hauser L."/>
            <person name="Kyrpides N."/>
            <person name="Mikhailova N."/>
            <person name="Ingram L."/>
            <person name="Richardson P."/>
        </authorList>
    </citation>
    <scope>NUCLEOTIDE SEQUENCE [LARGE SCALE GENOMIC DNA]</scope>
    <source>
        <strain>ATCC 8739 / DSM 1576 / NBRC 3972 / NCIMB 8545 / WDCM 00012 / Crooks</strain>
    </source>
</reference>
<organism>
    <name type="scientific">Escherichia coli (strain ATCC 8739 / DSM 1576 / NBRC 3972 / NCIMB 8545 / WDCM 00012 / Crooks)</name>
    <dbReference type="NCBI Taxonomy" id="481805"/>
    <lineage>
        <taxon>Bacteria</taxon>
        <taxon>Pseudomonadati</taxon>
        <taxon>Pseudomonadota</taxon>
        <taxon>Gammaproteobacteria</taxon>
        <taxon>Enterobacterales</taxon>
        <taxon>Enterobacteriaceae</taxon>
        <taxon>Escherichia</taxon>
    </lineage>
</organism>
<accession>B1IZT7</accession>
<evidence type="ECO:0000255" key="1">
    <source>
        <dbReference type="HAMAP-Rule" id="MF_01593"/>
    </source>
</evidence>
<proteinExistence type="inferred from homology"/>
<gene>
    <name evidence="1" type="primary">mtfA</name>
    <name type="ordered locus">EcolC_1670</name>
</gene>
<keyword id="KW-0031">Aminopeptidase</keyword>
<keyword id="KW-0963">Cytoplasm</keyword>
<keyword id="KW-0378">Hydrolase</keyword>
<keyword id="KW-0479">Metal-binding</keyword>
<keyword id="KW-0482">Metalloprotease</keyword>
<keyword id="KW-0645">Protease</keyword>
<keyword id="KW-0862">Zinc</keyword>